<name>LFTR_CAUVC</name>
<comment type="function">
    <text evidence="1">Functions in the N-end rule pathway of protein degradation where it conjugates Leu, Phe and, less efficiently, Met from aminoacyl-tRNAs to the N-termini of proteins containing an N-terminal arginine or lysine.</text>
</comment>
<comment type="catalytic activity">
    <reaction evidence="1">
        <text>N-terminal L-lysyl-[protein] + L-leucyl-tRNA(Leu) = N-terminal L-leucyl-L-lysyl-[protein] + tRNA(Leu) + H(+)</text>
        <dbReference type="Rhea" id="RHEA:12340"/>
        <dbReference type="Rhea" id="RHEA-COMP:9613"/>
        <dbReference type="Rhea" id="RHEA-COMP:9622"/>
        <dbReference type="Rhea" id="RHEA-COMP:12670"/>
        <dbReference type="Rhea" id="RHEA-COMP:12671"/>
        <dbReference type="ChEBI" id="CHEBI:15378"/>
        <dbReference type="ChEBI" id="CHEBI:65249"/>
        <dbReference type="ChEBI" id="CHEBI:78442"/>
        <dbReference type="ChEBI" id="CHEBI:78494"/>
        <dbReference type="ChEBI" id="CHEBI:133043"/>
        <dbReference type="EC" id="2.3.2.6"/>
    </reaction>
</comment>
<comment type="catalytic activity">
    <reaction evidence="1">
        <text>N-terminal L-arginyl-[protein] + L-leucyl-tRNA(Leu) = N-terminal L-leucyl-L-arginyl-[protein] + tRNA(Leu) + H(+)</text>
        <dbReference type="Rhea" id="RHEA:50416"/>
        <dbReference type="Rhea" id="RHEA-COMP:9613"/>
        <dbReference type="Rhea" id="RHEA-COMP:9622"/>
        <dbReference type="Rhea" id="RHEA-COMP:12672"/>
        <dbReference type="Rhea" id="RHEA-COMP:12673"/>
        <dbReference type="ChEBI" id="CHEBI:15378"/>
        <dbReference type="ChEBI" id="CHEBI:64719"/>
        <dbReference type="ChEBI" id="CHEBI:78442"/>
        <dbReference type="ChEBI" id="CHEBI:78494"/>
        <dbReference type="ChEBI" id="CHEBI:133044"/>
        <dbReference type="EC" id="2.3.2.6"/>
    </reaction>
</comment>
<comment type="catalytic activity">
    <reaction evidence="1">
        <text>L-phenylalanyl-tRNA(Phe) + an N-terminal L-alpha-aminoacyl-[protein] = an N-terminal L-phenylalanyl-L-alpha-aminoacyl-[protein] + tRNA(Phe)</text>
        <dbReference type="Rhea" id="RHEA:43632"/>
        <dbReference type="Rhea" id="RHEA-COMP:9668"/>
        <dbReference type="Rhea" id="RHEA-COMP:9699"/>
        <dbReference type="Rhea" id="RHEA-COMP:10636"/>
        <dbReference type="Rhea" id="RHEA-COMP:10637"/>
        <dbReference type="ChEBI" id="CHEBI:78442"/>
        <dbReference type="ChEBI" id="CHEBI:78531"/>
        <dbReference type="ChEBI" id="CHEBI:78597"/>
        <dbReference type="ChEBI" id="CHEBI:83561"/>
        <dbReference type="EC" id="2.3.2.6"/>
    </reaction>
</comment>
<comment type="subcellular location">
    <subcellularLocation>
        <location evidence="1">Cytoplasm</location>
    </subcellularLocation>
</comment>
<comment type="similarity">
    <text evidence="1">Belongs to the L/F-transferase family.</text>
</comment>
<sequence>MDDAFTVDDLIACYARGVFPMADAREDESLFLIDPERRGVLPLGTFHIPKRLARTVRNGPYEVRVDTAFDTVIENCAASRPGRLDTWINHPIQRLYGQLYARGLAHSVETWLGDELVGGLYGVSLGGAFFGESMFSTARDASKVALVHLVARLIAGGYELLDTQFLTEHLAQFGVMEISRADYRRRLSKALATPGDFYGLAAGATGIDCLQAISQAS</sequence>
<evidence type="ECO:0000255" key="1">
    <source>
        <dbReference type="HAMAP-Rule" id="MF_00688"/>
    </source>
</evidence>
<feature type="chain" id="PRO_0000207211" description="Leucyl/phenylalanyl-tRNA--protein transferase">
    <location>
        <begin position="1"/>
        <end position="217"/>
    </location>
</feature>
<keyword id="KW-0012">Acyltransferase</keyword>
<keyword id="KW-0963">Cytoplasm</keyword>
<keyword id="KW-1185">Reference proteome</keyword>
<keyword id="KW-0808">Transferase</keyword>
<accession>Q9A741</accession>
<protein>
    <recommendedName>
        <fullName evidence="1">Leucyl/phenylalanyl-tRNA--protein transferase</fullName>
        <ecNumber evidence="1">2.3.2.6</ecNumber>
    </recommendedName>
    <alternativeName>
        <fullName evidence="1">L/F-transferase</fullName>
    </alternativeName>
    <alternativeName>
        <fullName evidence="1">Leucyltransferase</fullName>
    </alternativeName>
    <alternativeName>
        <fullName evidence="1">Phenyalanyltransferase</fullName>
    </alternativeName>
</protein>
<dbReference type="EC" id="2.3.2.6" evidence="1"/>
<dbReference type="EMBL" id="AE005673">
    <property type="protein sequence ID" value="AAK23860.1"/>
    <property type="molecule type" value="Genomic_DNA"/>
</dbReference>
<dbReference type="PIR" id="H87482">
    <property type="entry name" value="H87482"/>
</dbReference>
<dbReference type="RefSeq" id="NP_420692.1">
    <property type="nucleotide sequence ID" value="NC_002696.2"/>
</dbReference>
<dbReference type="RefSeq" id="WP_010919751.1">
    <property type="nucleotide sequence ID" value="NC_002696.2"/>
</dbReference>
<dbReference type="SMR" id="Q9A741"/>
<dbReference type="STRING" id="190650.CC_1885"/>
<dbReference type="EnsemblBacteria" id="AAK23860">
    <property type="protein sequence ID" value="AAK23860"/>
    <property type="gene ID" value="CC_1885"/>
</dbReference>
<dbReference type="KEGG" id="ccr:CC_1885"/>
<dbReference type="PATRIC" id="fig|190650.5.peg.1902"/>
<dbReference type="eggNOG" id="COG2360">
    <property type="taxonomic scope" value="Bacteria"/>
</dbReference>
<dbReference type="HOGENOM" id="CLU_075045_1_1_5"/>
<dbReference type="BioCyc" id="CAULO:CC1885-MONOMER"/>
<dbReference type="Proteomes" id="UP000001816">
    <property type="component" value="Chromosome"/>
</dbReference>
<dbReference type="GO" id="GO:0005737">
    <property type="term" value="C:cytoplasm"/>
    <property type="evidence" value="ECO:0007669"/>
    <property type="project" value="UniProtKB-SubCell"/>
</dbReference>
<dbReference type="GO" id="GO:0008914">
    <property type="term" value="F:leucyl-tRNA--protein transferase activity"/>
    <property type="evidence" value="ECO:0007669"/>
    <property type="project" value="UniProtKB-UniRule"/>
</dbReference>
<dbReference type="GO" id="GO:0030163">
    <property type="term" value="P:protein catabolic process"/>
    <property type="evidence" value="ECO:0007669"/>
    <property type="project" value="UniProtKB-UniRule"/>
</dbReference>
<dbReference type="FunFam" id="3.40.630.70:FF:000001">
    <property type="entry name" value="Leucyl/phenylalanyl-tRNA--protein transferase"/>
    <property type="match status" value="1"/>
</dbReference>
<dbReference type="Gene3D" id="3.40.630.70">
    <property type="entry name" value="Leucyl/phenylalanyl-tRNA-protein transferase, C-terminal domain"/>
    <property type="match status" value="1"/>
</dbReference>
<dbReference type="HAMAP" id="MF_00688">
    <property type="entry name" value="Leu_Phe_trans"/>
    <property type="match status" value="1"/>
</dbReference>
<dbReference type="InterPro" id="IPR016181">
    <property type="entry name" value="Acyl_CoA_acyltransferase"/>
</dbReference>
<dbReference type="InterPro" id="IPR004616">
    <property type="entry name" value="Leu/Phe-tRNA_Trfase"/>
</dbReference>
<dbReference type="InterPro" id="IPR042203">
    <property type="entry name" value="Leu/Phe-tRNA_Trfase_C"/>
</dbReference>
<dbReference type="NCBIfam" id="TIGR00667">
    <property type="entry name" value="aat"/>
    <property type="match status" value="1"/>
</dbReference>
<dbReference type="PANTHER" id="PTHR30098">
    <property type="entry name" value="LEUCYL/PHENYLALANYL-TRNA--PROTEIN TRANSFERASE"/>
    <property type="match status" value="1"/>
</dbReference>
<dbReference type="PANTHER" id="PTHR30098:SF2">
    <property type="entry name" value="LEUCYL_PHENYLALANYL-TRNA--PROTEIN TRANSFERASE"/>
    <property type="match status" value="1"/>
</dbReference>
<dbReference type="Pfam" id="PF03588">
    <property type="entry name" value="Leu_Phe_trans"/>
    <property type="match status" value="1"/>
</dbReference>
<dbReference type="SUPFAM" id="SSF55729">
    <property type="entry name" value="Acyl-CoA N-acyltransferases (Nat)"/>
    <property type="match status" value="1"/>
</dbReference>
<proteinExistence type="inferred from homology"/>
<gene>
    <name evidence="1" type="primary">aat</name>
    <name type="ordered locus">CC_1885</name>
</gene>
<reference key="1">
    <citation type="journal article" date="2001" name="Proc. Natl. Acad. Sci. U.S.A.">
        <title>Complete genome sequence of Caulobacter crescentus.</title>
        <authorList>
            <person name="Nierman W.C."/>
            <person name="Feldblyum T.V."/>
            <person name="Laub M.T."/>
            <person name="Paulsen I.T."/>
            <person name="Nelson K.E."/>
            <person name="Eisen J.A."/>
            <person name="Heidelberg J.F."/>
            <person name="Alley M.R.K."/>
            <person name="Ohta N."/>
            <person name="Maddock J.R."/>
            <person name="Potocka I."/>
            <person name="Nelson W.C."/>
            <person name="Newton A."/>
            <person name="Stephens C."/>
            <person name="Phadke N.D."/>
            <person name="Ely B."/>
            <person name="DeBoy R.T."/>
            <person name="Dodson R.J."/>
            <person name="Durkin A.S."/>
            <person name="Gwinn M.L."/>
            <person name="Haft D.H."/>
            <person name="Kolonay J.F."/>
            <person name="Smit J."/>
            <person name="Craven M.B."/>
            <person name="Khouri H.M."/>
            <person name="Shetty J."/>
            <person name="Berry K.J."/>
            <person name="Utterback T.R."/>
            <person name="Tran K."/>
            <person name="Wolf A.M."/>
            <person name="Vamathevan J.J."/>
            <person name="Ermolaeva M.D."/>
            <person name="White O."/>
            <person name="Salzberg S.L."/>
            <person name="Venter J.C."/>
            <person name="Shapiro L."/>
            <person name="Fraser C.M."/>
        </authorList>
    </citation>
    <scope>NUCLEOTIDE SEQUENCE [LARGE SCALE GENOMIC DNA]</scope>
    <source>
        <strain>ATCC 19089 / CIP 103742 / CB 15</strain>
    </source>
</reference>
<organism>
    <name type="scientific">Caulobacter vibrioides (strain ATCC 19089 / CIP 103742 / CB 15)</name>
    <name type="common">Caulobacter crescentus</name>
    <dbReference type="NCBI Taxonomy" id="190650"/>
    <lineage>
        <taxon>Bacteria</taxon>
        <taxon>Pseudomonadati</taxon>
        <taxon>Pseudomonadota</taxon>
        <taxon>Alphaproteobacteria</taxon>
        <taxon>Caulobacterales</taxon>
        <taxon>Caulobacteraceae</taxon>
        <taxon>Caulobacter</taxon>
    </lineage>
</organism>